<feature type="chain" id="PRO_1000134337" description="2,3-diketo-L-gulonate reductase">
    <location>
        <begin position="1"/>
        <end position="332"/>
    </location>
</feature>
<feature type="active site" description="Proton donor" evidence="1">
    <location>
        <position position="44"/>
    </location>
</feature>
<feature type="binding site" evidence="1">
    <location>
        <begin position="168"/>
        <end position="174"/>
    </location>
    <ligand>
        <name>NAD(+)</name>
        <dbReference type="ChEBI" id="CHEBI:57540"/>
    </ligand>
</feature>
<feature type="binding site" evidence="1">
    <location>
        <begin position="224"/>
        <end position="225"/>
    </location>
    <ligand>
        <name>NAD(+)</name>
        <dbReference type="ChEBI" id="CHEBI:57540"/>
    </ligand>
</feature>
<feature type="binding site" evidence="1">
    <location>
        <begin position="304"/>
        <end position="306"/>
    </location>
    <ligand>
        <name>NAD(+)</name>
        <dbReference type="ChEBI" id="CHEBI:57540"/>
    </ligand>
</feature>
<organism>
    <name type="scientific">Escherichia coli O45:K1 (strain S88 / ExPEC)</name>
    <dbReference type="NCBI Taxonomy" id="585035"/>
    <lineage>
        <taxon>Bacteria</taxon>
        <taxon>Pseudomonadati</taxon>
        <taxon>Pseudomonadota</taxon>
        <taxon>Gammaproteobacteria</taxon>
        <taxon>Enterobacterales</taxon>
        <taxon>Enterobacteriaceae</taxon>
        <taxon>Escherichia</taxon>
    </lineage>
</organism>
<name>DLGD_ECO45</name>
<protein>
    <recommendedName>
        <fullName evidence="1">2,3-diketo-L-gulonate reductase</fullName>
        <shortName evidence="1">2,3-DKG reductase</shortName>
        <ecNumber evidence="1">1.1.1.130</ecNumber>
    </recommendedName>
    <alternativeName>
        <fullName evidence="1">3-dehydro-L-gulonate 2-dehydrogenase</fullName>
    </alternativeName>
</protein>
<comment type="function">
    <text evidence="1">Catalyzes the reduction of 2,3-diketo-L-gulonate in the presence of NADH, to form 3-keto-L-gulonate.</text>
</comment>
<comment type="catalytic activity">
    <reaction evidence="1">
        <text>3-dehydro-L-gulonate + NAD(+) = 2,3-dioxo-L-gulonate + NADH + H(+)</text>
        <dbReference type="Rhea" id="RHEA:21924"/>
        <dbReference type="ChEBI" id="CHEBI:15378"/>
        <dbReference type="ChEBI" id="CHEBI:57441"/>
        <dbReference type="ChEBI" id="CHEBI:57540"/>
        <dbReference type="ChEBI" id="CHEBI:57655"/>
        <dbReference type="ChEBI" id="CHEBI:57945"/>
        <dbReference type="EC" id="1.1.1.130"/>
    </reaction>
</comment>
<comment type="catalytic activity">
    <reaction evidence="1">
        <text>3-dehydro-L-gulonate + NADP(+) = 2,3-dioxo-L-gulonate + NADPH + H(+)</text>
        <dbReference type="Rhea" id="RHEA:21928"/>
        <dbReference type="ChEBI" id="CHEBI:15378"/>
        <dbReference type="ChEBI" id="CHEBI:57441"/>
        <dbReference type="ChEBI" id="CHEBI:57655"/>
        <dbReference type="ChEBI" id="CHEBI:57783"/>
        <dbReference type="ChEBI" id="CHEBI:58349"/>
        <dbReference type="EC" id="1.1.1.130"/>
    </reaction>
</comment>
<comment type="subunit">
    <text evidence="1">Homodimer.</text>
</comment>
<comment type="subcellular location">
    <subcellularLocation>
        <location evidence="1">Cytoplasm</location>
    </subcellularLocation>
</comment>
<comment type="similarity">
    <text evidence="1">Belongs to the LDH2/MDH2 oxidoreductase family. DlgD subfamily.</text>
</comment>
<gene>
    <name evidence="1" type="primary">dlgD</name>
    <name type="ordered locus">ECS88_3994</name>
</gene>
<dbReference type="EC" id="1.1.1.130" evidence="1"/>
<dbReference type="EMBL" id="CU928161">
    <property type="protein sequence ID" value="CAR05203.1"/>
    <property type="molecule type" value="Genomic_DNA"/>
</dbReference>
<dbReference type="SMR" id="B7MFE1"/>
<dbReference type="KEGG" id="ecz:ECS88_3994"/>
<dbReference type="HOGENOM" id="CLU_040452_4_0_6"/>
<dbReference type="Proteomes" id="UP000000747">
    <property type="component" value="Chromosome"/>
</dbReference>
<dbReference type="GO" id="GO:0005737">
    <property type="term" value="C:cytoplasm"/>
    <property type="evidence" value="ECO:0007669"/>
    <property type="project" value="UniProtKB-SubCell"/>
</dbReference>
<dbReference type="GO" id="GO:0047559">
    <property type="term" value="F:3-dehydro-L-gulonate 2-dehydrogenase activity"/>
    <property type="evidence" value="ECO:0007669"/>
    <property type="project" value="UniProtKB-UniRule"/>
</dbReference>
<dbReference type="GO" id="GO:0070403">
    <property type="term" value="F:NAD+ binding"/>
    <property type="evidence" value="ECO:0007669"/>
    <property type="project" value="InterPro"/>
</dbReference>
<dbReference type="Gene3D" id="1.10.1530.10">
    <property type="match status" value="1"/>
</dbReference>
<dbReference type="Gene3D" id="3.30.1370.60">
    <property type="entry name" value="Hypothetical oxidoreductase yiak, domain 2"/>
    <property type="match status" value="1"/>
</dbReference>
<dbReference type="Gene3D" id="3.30.60.50">
    <property type="entry name" value="Hypothetical oxidoreductase yiak, domain 3"/>
    <property type="match status" value="1"/>
</dbReference>
<dbReference type="HAMAP" id="MF_00820">
    <property type="entry name" value="Diketo_gul_reduc"/>
    <property type="match status" value="1"/>
</dbReference>
<dbReference type="InterPro" id="IPR023689">
    <property type="entry name" value="Diketo_gul_Rdtase"/>
</dbReference>
<dbReference type="InterPro" id="IPR043144">
    <property type="entry name" value="Mal/L-sulf/L-lact_DH-like_ah"/>
</dbReference>
<dbReference type="InterPro" id="IPR043143">
    <property type="entry name" value="Mal/L-sulf/L-lact_DH-like_NADP"/>
</dbReference>
<dbReference type="InterPro" id="IPR036111">
    <property type="entry name" value="Mal/L-sulfo/L-lacto_DH-like_sf"/>
</dbReference>
<dbReference type="InterPro" id="IPR003767">
    <property type="entry name" value="Malate/L-lactate_DH-like"/>
</dbReference>
<dbReference type="NCBIfam" id="NF009750">
    <property type="entry name" value="PRK13260.1"/>
    <property type="match status" value="1"/>
</dbReference>
<dbReference type="PANTHER" id="PTHR11091:SF3">
    <property type="entry name" value="2,3-DIKETO-L-GULONATE REDUCTASE"/>
    <property type="match status" value="1"/>
</dbReference>
<dbReference type="PANTHER" id="PTHR11091">
    <property type="entry name" value="OXIDOREDUCTASE-RELATED"/>
    <property type="match status" value="1"/>
</dbReference>
<dbReference type="Pfam" id="PF02615">
    <property type="entry name" value="Ldh_2"/>
    <property type="match status" value="1"/>
</dbReference>
<dbReference type="SUPFAM" id="SSF89733">
    <property type="entry name" value="L-sulfolactate dehydrogenase-like"/>
    <property type="match status" value="1"/>
</dbReference>
<reference key="1">
    <citation type="journal article" date="2009" name="PLoS Genet.">
        <title>Organised genome dynamics in the Escherichia coli species results in highly diverse adaptive paths.</title>
        <authorList>
            <person name="Touchon M."/>
            <person name="Hoede C."/>
            <person name="Tenaillon O."/>
            <person name="Barbe V."/>
            <person name="Baeriswyl S."/>
            <person name="Bidet P."/>
            <person name="Bingen E."/>
            <person name="Bonacorsi S."/>
            <person name="Bouchier C."/>
            <person name="Bouvet O."/>
            <person name="Calteau A."/>
            <person name="Chiapello H."/>
            <person name="Clermont O."/>
            <person name="Cruveiller S."/>
            <person name="Danchin A."/>
            <person name="Diard M."/>
            <person name="Dossat C."/>
            <person name="Karoui M.E."/>
            <person name="Frapy E."/>
            <person name="Garry L."/>
            <person name="Ghigo J.M."/>
            <person name="Gilles A.M."/>
            <person name="Johnson J."/>
            <person name="Le Bouguenec C."/>
            <person name="Lescat M."/>
            <person name="Mangenot S."/>
            <person name="Martinez-Jehanne V."/>
            <person name="Matic I."/>
            <person name="Nassif X."/>
            <person name="Oztas S."/>
            <person name="Petit M.A."/>
            <person name="Pichon C."/>
            <person name="Rouy Z."/>
            <person name="Ruf C.S."/>
            <person name="Schneider D."/>
            <person name="Tourret J."/>
            <person name="Vacherie B."/>
            <person name="Vallenet D."/>
            <person name="Medigue C."/>
            <person name="Rocha E.P.C."/>
            <person name="Denamur E."/>
        </authorList>
    </citation>
    <scope>NUCLEOTIDE SEQUENCE [LARGE SCALE GENOMIC DNA]</scope>
    <source>
        <strain>S88 / ExPEC</strain>
    </source>
</reference>
<keyword id="KW-0963">Cytoplasm</keyword>
<keyword id="KW-0520">NAD</keyword>
<keyword id="KW-0560">Oxidoreductase</keyword>
<keyword id="KW-1185">Reference proteome</keyword>
<sequence length="332" mass="36601">MKVTFEQLKAAFNRVLISRGVDNETADACAEMFARTTESGVYSHGVNRFPRFIQQLENGDIIPDAQPKRITSLGAIEQWDAQRSIGNLTAKKMMDRAIELAADHGIGLVALRNANHWMRGGSYGWQAAEKGYIGICWTNSIAVMPPWGAKECRIGTNPLIVAIPSTPITMVDMSMSMFSYGMLEVNRLAGRQLPVDGGFDDEGNLTKEPGVIEKNRRILPMGYWKGSGMSIVLDMIATLLSDGASVAEVTEDNSDEYGISQIFIAIEVDKLIDGPTRDAKLQRIMDYVTSAERADENQAIRLPGHEFTTLLAENRRNGITVDDSVWAKIQAL</sequence>
<proteinExistence type="inferred from homology"/>
<accession>B7MFE1</accession>
<evidence type="ECO:0000255" key="1">
    <source>
        <dbReference type="HAMAP-Rule" id="MF_00820"/>
    </source>
</evidence>